<proteinExistence type="evidence at transcript level"/>
<name>FB108_ARATH</name>
<organism>
    <name type="scientific">Arabidopsis thaliana</name>
    <name type="common">Mouse-ear cress</name>
    <dbReference type="NCBI Taxonomy" id="3702"/>
    <lineage>
        <taxon>Eukaryota</taxon>
        <taxon>Viridiplantae</taxon>
        <taxon>Streptophyta</taxon>
        <taxon>Embryophyta</taxon>
        <taxon>Tracheophyta</taxon>
        <taxon>Spermatophyta</taxon>
        <taxon>Magnoliopsida</taxon>
        <taxon>eudicotyledons</taxon>
        <taxon>Gunneridae</taxon>
        <taxon>Pentapetalae</taxon>
        <taxon>rosids</taxon>
        <taxon>malvids</taxon>
        <taxon>Brassicales</taxon>
        <taxon>Brassicaceae</taxon>
        <taxon>Camelineae</taxon>
        <taxon>Arabidopsis</taxon>
    </lineage>
</organism>
<reference key="1">
    <citation type="journal article" date="1999" name="Nature">
        <title>Sequence and analysis of chromosome 2 of the plant Arabidopsis thaliana.</title>
        <authorList>
            <person name="Lin X."/>
            <person name="Kaul S."/>
            <person name="Rounsley S.D."/>
            <person name="Shea T.P."/>
            <person name="Benito M.-I."/>
            <person name="Town C.D."/>
            <person name="Fujii C.Y."/>
            <person name="Mason T.M."/>
            <person name="Bowman C.L."/>
            <person name="Barnstead M.E."/>
            <person name="Feldblyum T.V."/>
            <person name="Buell C.R."/>
            <person name="Ketchum K.A."/>
            <person name="Lee J.J."/>
            <person name="Ronning C.M."/>
            <person name="Koo H.L."/>
            <person name="Moffat K.S."/>
            <person name="Cronin L.A."/>
            <person name="Shen M."/>
            <person name="Pai G."/>
            <person name="Van Aken S."/>
            <person name="Umayam L."/>
            <person name="Tallon L.J."/>
            <person name="Gill J.E."/>
            <person name="Adams M.D."/>
            <person name="Carrera A.J."/>
            <person name="Creasy T.H."/>
            <person name="Goodman H.M."/>
            <person name="Somerville C.R."/>
            <person name="Copenhaver G.P."/>
            <person name="Preuss D."/>
            <person name="Nierman W.C."/>
            <person name="White O."/>
            <person name="Eisen J.A."/>
            <person name="Salzberg S.L."/>
            <person name="Fraser C.M."/>
            <person name="Venter J.C."/>
        </authorList>
    </citation>
    <scope>NUCLEOTIDE SEQUENCE [LARGE SCALE GENOMIC DNA]</scope>
    <source>
        <strain>cv. Columbia</strain>
    </source>
</reference>
<reference key="2">
    <citation type="journal article" date="2017" name="Plant J.">
        <title>Araport11: a complete reannotation of the Arabidopsis thaliana reference genome.</title>
        <authorList>
            <person name="Cheng C.Y."/>
            <person name="Krishnakumar V."/>
            <person name="Chan A.P."/>
            <person name="Thibaud-Nissen F."/>
            <person name="Schobel S."/>
            <person name="Town C.D."/>
        </authorList>
    </citation>
    <scope>GENOME REANNOTATION</scope>
    <source>
        <strain>cv. Columbia</strain>
    </source>
</reference>
<reference key="3">
    <citation type="journal article" date="2006" name="Plant Biotechnol. J.">
        <title>Simultaneous high-throughput recombinational cloning of open reading frames in closed and open configurations.</title>
        <authorList>
            <person name="Underwood B.A."/>
            <person name="Vanderhaeghen R."/>
            <person name="Whitford R."/>
            <person name="Town C.D."/>
            <person name="Hilson P."/>
        </authorList>
    </citation>
    <scope>NUCLEOTIDE SEQUENCE [LARGE SCALE MRNA]</scope>
    <source>
        <strain>cv. Columbia</strain>
    </source>
</reference>
<keyword id="KW-1185">Reference proteome</keyword>
<protein>
    <recommendedName>
        <fullName>F-box protein At2g16450</fullName>
    </recommendedName>
</protein>
<accession>Q9SIV7</accession>
<dbReference type="EMBL" id="AC007047">
    <property type="protein sequence ID" value="AAD22295.1"/>
    <property type="molecule type" value="Genomic_DNA"/>
</dbReference>
<dbReference type="EMBL" id="CP002685">
    <property type="protein sequence ID" value="AEC06498.1"/>
    <property type="molecule type" value="Genomic_DNA"/>
</dbReference>
<dbReference type="EMBL" id="DQ446506">
    <property type="protein sequence ID" value="ABE65816.1"/>
    <property type="molecule type" value="mRNA"/>
</dbReference>
<dbReference type="PIR" id="D84540">
    <property type="entry name" value="D84540"/>
</dbReference>
<dbReference type="RefSeq" id="NP_179237.1">
    <property type="nucleotide sequence ID" value="NM_127198.2"/>
</dbReference>
<dbReference type="FunCoup" id="Q9SIV7">
    <property type="interactions" value="31"/>
</dbReference>
<dbReference type="iPTMnet" id="Q9SIV7"/>
<dbReference type="PaxDb" id="3702-AT2G16450.1"/>
<dbReference type="ProteomicsDB" id="222540"/>
<dbReference type="DNASU" id="816143"/>
<dbReference type="EnsemblPlants" id="AT2G16450.1">
    <property type="protein sequence ID" value="AT2G16450.1"/>
    <property type="gene ID" value="AT2G16450"/>
</dbReference>
<dbReference type="GeneID" id="816143"/>
<dbReference type="Gramene" id="AT2G16450.1">
    <property type="protein sequence ID" value="AT2G16450.1"/>
    <property type="gene ID" value="AT2G16450"/>
</dbReference>
<dbReference type="KEGG" id="ath:AT2G16450"/>
<dbReference type="Araport" id="AT2G16450"/>
<dbReference type="TAIR" id="AT2G16450"/>
<dbReference type="HOGENOM" id="CLU_027176_9_0_1"/>
<dbReference type="InParanoid" id="Q9SIV7"/>
<dbReference type="OMA" id="WILADVE"/>
<dbReference type="OrthoDB" id="1021511at2759"/>
<dbReference type="PhylomeDB" id="Q9SIV7"/>
<dbReference type="PRO" id="PR:Q9SIV7"/>
<dbReference type="Proteomes" id="UP000006548">
    <property type="component" value="Chromosome 2"/>
</dbReference>
<dbReference type="ExpressionAtlas" id="Q9SIV7">
    <property type="expression patterns" value="baseline and differential"/>
</dbReference>
<dbReference type="CDD" id="cd22157">
    <property type="entry name" value="F-box_AtFBW1-like"/>
    <property type="match status" value="1"/>
</dbReference>
<dbReference type="Gene3D" id="1.20.1280.50">
    <property type="match status" value="1"/>
</dbReference>
<dbReference type="InterPro" id="IPR013187">
    <property type="entry name" value="F-box-assoc_dom_typ3"/>
</dbReference>
<dbReference type="InterPro" id="IPR017451">
    <property type="entry name" value="F-box-assoc_interact_dom"/>
</dbReference>
<dbReference type="InterPro" id="IPR036047">
    <property type="entry name" value="F-box-like_dom_sf"/>
</dbReference>
<dbReference type="InterPro" id="IPR001810">
    <property type="entry name" value="F-box_dom"/>
</dbReference>
<dbReference type="NCBIfam" id="TIGR01640">
    <property type="entry name" value="F_box_assoc_1"/>
    <property type="match status" value="1"/>
</dbReference>
<dbReference type="PANTHER" id="PTHR31111">
    <property type="entry name" value="BNAA05G37150D PROTEIN-RELATED"/>
    <property type="match status" value="1"/>
</dbReference>
<dbReference type="PANTHER" id="PTHR31111:SF130">
    <property type="entry name" value="F-BOX ASSOCIATED UBIQUITINATION EFFECTOR FAMILY PROTEIN"/>
    <property type="match status" value="1"/>
</dbReference>
<dbReference type="Pfam" id="PF00646">
    <property type="entry name" value="F-box"/>
    <property type="match status" value="1"/>
</dbReference>
<dbReference type="Pfam" id="PF08268">
    <property type="entry name" value="FBA_3"/>
    <property type="match status" value="1"/>
</dbReference>
<dbReference type="SMART" id="SM00256">
    <property type="entry name" value="FBOX"/>
    <property type="match status" value="1"/>
</dbReference>
<dbReference type="SUPFAM" id="SSF81383">
    <property type="entry name" value="F-box domain"/>
    <property type="match status" value="1"/>
</dbReference>
<gene>
    <name type="ordered locus">At2g16450</name>
    <name type="ORF">F16F14.5</name>
</gene>
<feature type="chain" id="PRO_0000283381" description="F-box protein At2g16450">
    <location>
        <begin position="1"/>
        <end position="427"/>
    </location>
</feature>
<feature type="domain" description="F-box">
    <location>
        <begin position="1"/>
        <end position="45"/>
    </location>
</feature>
<sequence length="427" mass="49580">MNPSPITIDLILEILSRLPAKSVRRFHCVSKRWASIFGSPYFKELFLTRSSTKPRLLFAIAEKGNKEKDCVWRFFSSPQLENPYEKSSSTLVATAEFHVRFSPDNLLICHYYDLKYFSIGYAFGLIYIYGNRGRARPLICNPTTGRYAILPNRYTYRKAFSFFGFDPIDKQYKALSMVYPSGPGHSRVITFGAGDLKWRRIKCSLRHDIKSEGVCINGVLYYLGDTSDWSRVNGNHVTSGYMIVCFDVRSEKFTFIDVKRFCRLINYKGKLAVIYWEDDVDIQELYYKKGIDVEEYVENNVNADATNELCVWILADVEKQEWSKHAYTWTDEKFFRRLVSIAGVTASGEIVFSMRKCNPKQPFYVFYFNPERNSLQRVEIQGFGEAVTKSCDVCTFVNHVEDLNVYDLKQLKSVHPPLVEPEYYDSD</sequence>